<comment type="subunit">
    <text evidence="1">Part of the 50S ribosomal subunit. Contacts protein L32.</text>
</comment>
<comment type="similarity">
    <text evidence="1">Belongs to the bacterial ribosomal protein bL17 family.</text>
</comment>
<organism>
    <name type="scientific">Thermoanaerobacter pseudethanolicus (strain ATCC 33223 / 39E)</name>
    <name type="common">Clostridium thermohydrosulfuricum</name>
    <dbReference type="NCBI Taxonomy" id="340099"/>
    <lineage>
        <taxon>Bacteria</taxon>
        <taxon>Bacillati</taxon>
        <taxon>Bacillota</taxon>
        <taxon>Clostridia</taxon>
        <taxon>Thermoanaerobacterales</taxon>
        <taxon>Thermoanaerobacteraceae</taxon>
        <taxon>Thermoanaerobacter</taxon>
    </lineage>
</organism>
<name>RL17_THEP3</name>
<protein>
    <recommendedName>
        <fullName evidence="1">Large ribosomal subunit protein bL17</fullName>
    </recommendedName>
    <alternativeName>
        <fullName evidence="2">50S ribosomal protein L17</fullName>
    </alternativeName>
</protein>
<sequence>MGYRKLGRPSDQRRAMLRNLVTDFLKYGRITTTEARAKEVRSISEKMITLGKRGDLHARRQALAYILDESVVKKLFDEIAPKYKDRQGGYTRILKLGPRRGDGAPLVIIELV</sequence>
<reference key="1">
    <citation type="submission" date="2008-01" db="EMBL/GenBank/DDBJ databases">
        <title>Complete sequence of Thermoanaerobacter pseudethanolicus 39E.</title>
        <authorList>
            <person name="Copeland A."/>
            <person name="Lucas S."/>
            <person name="Lapidus A."/>
            <person name="Barry K."/>
            <person name="Glavina del Rio T."/>
            <person name="Dalin E."/>
            <person name="Tice H."/>
            <person name="Pitluck S."/>
            <person name="Bruce D."/>
            <person name="Goodwin L."/>
            <person name="Saunders E."/>
            <person name="Brettin T."/>
            <person name="Detter J.C."/>
            <person name="Han C."/>
            <person name="Schmutz J."/>
            <person name="Larimer F."/>
            <person name="Land M."/>
            <person name="Hauser L."/>
            <person name="Kyrpides N."/>
            <person name="Lykidis A."/>
            <person name="Hemme C."/>
            <person name="Fields M.W."/>
            <person name="He Z."/>
            <person name="Zhou J."/>
            <person name="Richardson P."/>
        </authorList>
    </citation>
    <scope>NUCLEOTIDE SEQUENCE [LARGE SCALE GENOMIC DNA]</scope>
    <source>
        <strain>ATCC 33223 / DSM 2355 / 39E</strain>
    </source>
</reference>
<evidence type="ECO:0000255" key="1">
    <source>
        <dbReference type="HAMAP-Rule" id="MF_01368"/>
    </source>
</evidence>
<evidence type="ECO:0000305" key="2"/>
<keyword id="KW-1185">Reference proteome</keyword>
<keyword id="KW-0687">Ribonucleoprotein</keyword>
<keyword id="KW-0689">Ribosomal protein</keyword>
<gene>
    <name evidence="1" type="primary">rplQ</name>
    <name type="ordered locus">Teth39_0403</name>
</gene>
<proteinExistence type="inferred from homology"/>
<feature type="chain" id="PRO_1000144497" description="Large ribosomal subunit protein bL17">
    <location>
        <begin position="1"/>
        <end position="112"/>
    </location>
</feature>
<accession>B0KCM9</accession>
<dbReference type="EMBL" id="CP000924">
    <property type="protein sequence ID" value="ABY94072.1"/>
    <property type="molecule type" value="Genomic_DNA"/>
</dbReference>
<dbReference type="RefSeq" id="WP_003868588.1">
    <property type="nucleotide sequence ID" value="NC_010321.1"/>
</dbReference>
<dbReference type="SMR" id="B0KCM9"/>
<dbReference type="STRING" id="340099.Teth39_0403"/>
<dbReference type="KEGG" id="tpd:Teth39_0403"/>
<dbReference type="eggNOG" id="COG0203">
    <property type="taxonomic scope" value="Bacteria"/>
</dbReference>
<dbReference type="HOGENOM" id="CLU_074407_2_2_9"/>
<dbReference type="Proteomes" id="UP000002156">
    <property type="component" value="Chromosome"/>
</dbReference>
<dbReference type="GO" id="GO:0022625">
    <property type="term" value="C:cytosolic large ribosomal subunit"/>
    <property type="evidence" value="ECO:0007669"/>
    <property type="project" value="TreeGrafter"/>
</dbReference>
<dbReference type="GO" id="GO:0003735">
    <property type="term" value="F:structural constituent of ribosome"/>
    <property type="evidence" value="ECO:0007669"/>
    <property type="project" value="InterPro"/>
</dbReference>
<dbReference type="GO" id="GO:0006412">
    <property type="term" value="P:translation"/>
    <property type="evidence" value="ECO:0007669"/>
    <property type="project" value="UniProtKB-UniRule"/>
</dbReference>
<dbReference type="FunFam" id="3.90.1030.10:FF:000002">
    <property type="entry name" value="50S ribosomal protein L17"/>
    <property type="match status" value="1"/>
</dbReference>
<dbReference type="Gene3D" id="3.90.1030.10">
    <property type="entry name" value="Ribosomal protein L17"/>
    <property type="match status" value="1"/>
</dbReference>
<dbReference type="HAMAP" id="MF_01368">
    <property type="entry name" value="Ribosomal_bL17"/>
    <property type="match status" value="1"/>
</dbReference>
<dbReference type="InterPro" id="IPR000456">
    <property type="entry name" value="Ribosomal_bL17"/>
</dbReference>
<dbReference type="InterPro" id="IPR047859">
    <property type="entry name" value="Ribosomal_bL17_CS"/>
</dbReference>
<dbReference type="InterPro" id="IPR036373">
    <property type="entry name" value="Ribosomal_bL17_sf"/>
</dbReference>
<dbReference type="NCBIfam" id="TIGR00059">
    <property type="entry name" value="L17"/>
    <property type="match status" value="1"/>
</dbReference>
<dbReference type="PANTHER" id="PTHR14413:SF16">
    <property type="entry name" value="LARGE RIBOSOMAL SUBUNIT PROTEIN BL17M"/>
    <property type="match status" value="1"/>
</dbReference>
<dbReference type="PANTHER" id="PTHR14413">
    <property type="entry name" value="RIBOSOMAL PROTEIN L17"/>
    <property type="match status" value="1"/>
</dbReference>
<dbReference type="Pfam" id="PF01196">
    <property type="entry name" value="Ribosomal_L17"/>
    <property type="match status" value="1"/>
</dbReference>
<dbReference type="SUPFAM" id="SSF64263">
    <property type="entry name" value="Prokaryotic ribosomal protein L17"/>
    <property type="match status" value="1"/>
</dbReference>
<dbReference type="PROSITE" id="PS01167">
    <property type="entry name" value="RIBOSOMAL_L17"/>
    <property type="match status" value="1"/>
</dbReference>